<comment type="interaction">
    <interactant intactId="EBI-726044">
        <id>Q9NW97</id>
    </interactant>
    <interactant intactId="EBI-13059134">
        <id>Q13520</id>
        <label>AQP6</label>
    </interactant>
    <organismsDiffer>false</organismsDiffer>
    <experiments>3</experiments>
</comment>
<comment type="interaction">
    <interactant intactId="EBI-726044">
        <id>Q9NW97</id>
    </interactant>
    <interactant intactId="EBI-747430">
        <id>Q9BXK5</id>
        <label>BCL2L13</label>
    </interactant>
    <organismsDiffer>false</organismsDiffer>
    <experiments>3</experiments>
</comment>
<comment type="interaction">
    <interactant intactId="EBI-726044">
        <id>Q9NW97</id>
    </interactant>
    <interactant intactId="EBI-12003442">
        <id>Q8WVX3-2</id>
        <label>C4orf3</label>
    </interactant>
    <organismsDiffer>false</organismsDiffer>
    <experiments>3</experiments>
</comment>
<comment type="interaction">
    <interactant intactId="EBI-726044">
        <id>Q9NW97</id>
    </interactant>
    <interactant intactId="EBI-9083477">
        <id>Q9P0B6</id>
        <label>CCDC167</label>
    </interactant>
    <organismsDiffer>false</organismsDiffer>
    <experiments>3</experiments>
</comment>
<comment type="interaction">
    <interactant intactId="EBI-726044">
        <id>Q9NW97</id>
    </interactant>
    <interactant intactId="EBI-10271156">
        <id>Q8NHW4</id>
        <label>CCL4L2</label>
    </interactant>
    <organismsDiffer>false</organismsDiffer>
    <experiments>3</experiments>
</comment>
<comment type="interaction">
    <interactant intactId="EBI-726044">
        <id>Q9NW97</id>
    </interactant>
    <interactant intactId="EBI-1046040">
        <id>P00387</id>
        <label>CYB5R3</label>
    </interactant>
    <organismsDiffer>false</organismsDiffer>
    <experiments>3</experiments>
</comment>
<comment type="interaction">
    <interactant intactId="EBI-726044">
        <id>Q9NW97</id>
    </interactant>
    <interactant intactId="EBI-1752413">
        <id>P78329</id>
        <label>CYP4F2</label>
    </interactant>
    <organismsDiffer>false</organismsDiffer>
    <experiments>3</experiments>
</comment>
<comment type="interaction">
    <interactant intactId="EBI-726044">
        <id>Q9NW97</id>
    </interactant>
    <interactant intactId="EBI-3915253">
        <id>Q15125</id>
        <label>EBP</label>
    </interactant>
    <organismsDiffer>false</organismsDiffer>
    <experiments>3</experiments>
</comment>
<comment type="interaction">
    <interactant intactId="EBI-726044">
        <id>Q9NW97</id>
    </interactant>
    <interactant intactId="EBI-3907816">
        <id>P54852</id>
        <label>EMP3</label>
    </interactant>
    <organismsDiffer>false</organismsDiffer>
    <experiments>3</experiments>
</comment>
<comment type="interaction">
    <interactant intactId="EBI-726044">
        <id>Q9NW97</id>
    </interactant>
    <interactant intactId="EBI-2515857">
        <id>O43681</id>
        <label>GET3</label>
    </interactant>
    <organismsDiffer>false</organismsDiffer>
    <experiments>3</experiments>
</comment>
<comment type="interaction">
    <interactant intactId="EBI-726044">
        <id>Q9NW97</id>
    </interactant>
    <interactant intactId="EBI-1564678">
        <id>Q96J02</id>
        <label>ITCH</label>
    </interactant>
    <organismsDiffer>false</organismsDiffer>
    <experiments>4</experiments>
</comment>
<comment type="interaction">
    <interactant intactId="EBI-726044">
        <id>Q9NW97</id>
    </interactant>
    <interactant intactId="EBI-726944">
        <id>P46934</id>
        <label>NEDD4</label>
    </interactant>
    <organismsDiffer>false</organismsDiffer>
    <experiments>3</experiments>
</comment>
<comment type="interaction">
    <interactant intactId="EBI-726044">
        <id>Q9NW97</id>
    </interactant>
    <interactant intactId="EBI-10317425">
        <id>Q9NZG7</id>
        <label>NINJ2</label>
    </interactant>
    <organismsDiffer>false</organismsDiffer>
    <experiments>3</experiments>
</comment>
<comment type="interaction">
    <interactant intactId="EBI-726044">
        <id>Q9NW97</id>
    </interactant>
    <interactant intactId="EBI-12051377">
        <id>Q8N912</id>
        <label>NRAC</label>
    </interactant>
    <organismsDiffer>false</organismsDiffer>
    <experiments>3</experiments>
</comment>
<comment type="interaction">
    <interactant intactId="EBI-726044">
        <id>Q9NW97</id>
    </interactant>
    <interactant intactId="EBI-608347">
        <id>Q04941</id>
        <label>PLP2</label>
    </interactant>
    <organismsDiffer>false</organismsDiffer>
    <experiments>3</experiments>
</comment>
<comment type="interaction">
    <interactant intactId="EBI-726044">
        <id>Q9NW97</id>
    </interactant>
    <interactant intactId="EBI-1220572">
        <id>P54829</id>
        <label>PTPN5</label>
    </interactant>
    <organismsDiffer>false</organismsDiffer>
    <experiments>3</experiments>
</comment>
<comment type="interaction">
    <interactant intactId="EBI-726044">
        <id>Q9NW97</id>
    </interactant>
    <interactant intactId="EBI-7545592">
        <id>Q9H6H4</id>
        <label>REEP4</label>
    </interactant>
    <organismsDiffer>false</organismsDiffer>
    <experiments>3</experiments>
</comment>
<comment type="interaction">
    <interactant intactId="EBI-726044">
        <id>Q9NW97</id>
    </interactant>
    <interactant intactId="EBI-10244780">
        <id>Q5QGT7</id>
        <label>RTP2</label>
    </interactant>
    <organismsDiffer>false</organismsDiffer>
    <experiments>3</experiments>
</comment>
<comment type="interaction">
    <interactant intactId="EBI-726044">
        <id>Q9NW97</id>
    </interactant>
    <interactant intactId="EBI-4402709">
        <id>P60059</id>
        <label>SEC61G</label>
    </interactant>
    <organismsDiffer>false</organismsDiffer>
    <experiments>3</experiments>
</comment>
<comment type="interaction">
    <interactant intactId="EBI-726044">
        <id>Q9NW97</id>
    </interactant>
    <interactant intactId="EBI-4402330">
        <id>O95562</id>
        <label>SFT2D2</label>
    </interactant>
    <organismsDiffer>false</organismsDiffer>
    <experiments>3</experiments>
</comment>
<comment type="interaction">
    <interactant intactId="EBI-726044">
        <id>Q9NW97</id>
    </interactant>
    <interactant intactId="EBI-1171999">
        <id>Q9BWM7</id>
        <label>SFXN3</label>
    </interactant>
    <organismsDiffer>false</organismsDiffer>
    <experiments>3</experiments>
</comment>
<comment type="interaction">
    <interactant intactId="EBI-726044">
        <id>Q9NW97</id>
    </interactant>
    <interactant intactId="EBI-10226799">
        <id>Q0VAQ4</id>
        <label>SMAGP</label>
    </interactant>
    <organismsDiffer>false</organismsDiffer>
    <experiments>3</experiments>
</comment>
<comment type="interaction">
    <interactant intactId="EBI-726044">
        <id>Q9NW97</id>
    </interactant>
    <interactant intactId="EBI-12188413">
        <id>B2RUZ4</id>
        <label>SMIM1</label>
    </interactant>
    <organismsDiffer>false</organismsDiffer>
    <experiments>3</experiments>
</comment>
<comment type="interaction">
    <interactant intactId="EBI-726044">
        <id>Q9NW97</id>
    </interactant>
    <interactant intactId="EBI-12200293">
        <id>P0DN84</id>
        <label>STRIT1</label>
    </interactant>
    <organismsDiffer>false</organismsDiffer>
    <experiments>3</experiments>
</comment>
<comment type="interaction">
    <interactant intactId="EBI-726044">
        <id>Q9NW97</id>
    </interactant>
    <interactant intactId="EBI-12845616">
        <id>Q6UX40</id>
        <label>TMEM107</label>
    </interactant>
    <organismsDiffer>false</organismsDiffer>
    <experiments>3</experiments>
</comment>
<comment type="interaction">
    <interactant intactId="EBI-726044">
        <id>Q9NW97</id>
    </interactant>
    <interactant intactId="EBI-2800360">
        <id>Q9Y6G1</id>
        <label>TMEM14A</label>
    </interactant>
    <organismsDiffer>false</organismsDiffer>
    <experiments>3</experiments>
</comment>
<comment type="interaction">
    <interactant intactId="EBI-726044">
        <id>Q9NW97</id>
    </interactant>
    <interactant intactId="EBI-8638294">
        <id>Q9NUH8</id>
        <label>TMEM14B</label>
    </interactant>
    <organismsDiffer>false</organismsDiffer>
    <experiments>3</experiments>
</comment>
<comment type="interaction">
    <interactant intactId="EBI-726044">
        <id>Q9NW97</id>
    </interactant>
    <interactant intactId="EBI-10315004">
        <id>Q9NWH2</id>
        <label>TMEM242</label>
    </interactant>
    <organismsDiffer>false</organismsDiffer>
    <experiments>3</experiments>
</comment>
<comment type="interaction">
    <interactant intactId="EBI-726044">
        <id>Q9NW97</id>
    </interactant>
    <interactant intactId="EBI-11956809">
        <id>Q8TBM7</id>
        <label>TMEM254</label>
    </interactant>
    <organismsDiffer>false</organismsDiffer>
    <experiments>3</experiments>
</comment>
<comment type="interaction">
    <interactant intactId="EBI-726044">
        <id>Q9NW97</id>
    </interactant>
    <interactant intactId="EBI-6447886">
        <id>Q9Y320</id>
        <label>TMX2</label>
    </interactant>
    <organismsDiffer>false</organismsDiffer>
    <experiments>3</experiments>
</comment>
<comment type="interaction">
    <interactant intactId="EBI-726044">
        <id>Q9NW97</id>
    </interactant>
    <interactant intactId="EBI-12003468">
        <id>A0AVG3</id>
        <label>TSNARE1</label>
    </interactant>
    <organismsDiffer>false</organismsDiffer>
    <experiments>3</experiments>
</comment>
<comment type="interaction">
    <interactant intactId="EBI-726044">
        <id>Q9NW97</id>
    </interactant>
    <interactant intactId="EBI-988826">
        <id>Q9Y385</id>
        <label>UBE2J1</label>
    </interactant>
    <organismsDiffer>false</organismsDiffer>
    <experiments>3</experiments>
</comment>
<comment type="interaction">
    <interactant intactId="EBI-726044">
        <id>Q9NW97</id>
    </interactant>
    <interactant intactId="EBI-744953">
        <id>O75379</id>
        <label>VAMP4</label>
    </interactant>
    <organismsDiffer>false</organismsDiffer>
    <experiments>3</experiments>
</comment>
<comment type="interaction">
    <interactant intactId="EBI-726044">
        <id>Q9NW97</id>
    </interactant>
    <interactant intactId="EBI-723716">
        <id>Q9UEU0</id>
        <label>VTI1B</label>
    </interactant>
    <organismsDiffer>false</organismsDiffer>
    <experiments>3</experiments>
</comment>
<comment type="subcellular location">
    <subcellularLocation>
        <location evidence="3">Membrane</location>
        <topology evidence="3">Multi-pass membrane protein</topology>
    </subcellularLocation>
</comment>
<gene>
    <name type="primary">TMEM51</name>
    <name type="synonym">C1orf72</name>
</gene>
<sequence length="253" mass="27759">MMAQSKANGSHYALTAIGLGMLVLGVIMAMWNLVPGFSAAEKPTAQGSNKTEVGGGILKSKTFSVAYVLVGAGVMLLLLSICLSIRDKRKQRQGEDLAHVQHPTGAGPHAQEEDSQEEEEEDEEAASRYYVPSYEEVMNTNYSEARGEEQNPRLSISLPSYESLTGLDETTPTSTRADVEASPGNPPDRQNSKLAKRLKPLKVRRIKSEKLHLKDFRINLPDKNVPPPSIEPLTPPPQYDEVQEKAPDTRPPD</sequence>
<dbReference type="EMBL" id="AK001061">
    <property type="protein sequence ID" value="BAA91486.1"/>
    <property type="molecule type" value="mRNA"/>
</dbReference>
<dbReference type="EMBL" id="AK292184">
    <property type="protein sequence ID" value="BAF84873.1"/>
    <property type="molecule type" value="mRNA"/>
</dbReference>
<dbReference type="EMBL" id="CR457120">
    <property type="protein sequence ID" value="CAG33401.1"/>
    <property type="molecule type" value="mRNA"/>
</dbReference>
<dbReference type="EMBL" id="AL391094">
    <property type="status" value="NOT_ANNOTATED_CDS"/>
    <property type="molecule type" value="Genomic_DNA"/>
</dbReference>
<dbReference type="EMBL" id="CH471167">
    <property type="protein sequence ID" value="EAW51711.1"/>
    <property type="molecule type" value="Genomic_DNA"/>
</dbReference>
<dbReference type="EMBL" id="BC000202">
    <property type="protein sequence ID" value="AAH00202.1"/>
    <property type="molecule type" value="mRNA"/>
</dbReference>
<dbReference type="EMBL" id="BC000593">
    <property type="protein sequence ID" value="AAH00593.1"/>
    <property type="molecule type" value="mRNA"/>
</dbReference>
<dbReference type="CCDS" id="CCDS154.1"/>
<dbReference type="RefSeq" id="NP_001129688.1">
    <property type="nucleotide sequence ID" value="NM_001136216.2"/>
</dbReference>
<dbReference type="RefSeq" id="NP_001129689.1">
    <property type="nucleotide sequence ID" value="NM_001136217.2"/>
</dbReference>
<dbReference type="RefSeq" id="NP_001129690.1">
    <property type="nucleotide sequence ID" value="NM_001136218.2"/>
</dbReference>
<dbReference type="RefSeq" id="NP_001306594.1">
    <property type="nucleotide sequence ID" value="NM_001319665.1"/>
</dbReference>
<dbReference type="RefSeq" id="NP_060492.1">
    <property type="nucleotide sequence ID" value="NM_018022.3"/>
</dbReference>
<dbReference type="RefSeq" id="XP_005245976.1">
    <property type="nucleotide sequence ID" value="XM_005245919.1"/>
</dbReference>
<dbReference type="RefSeq" id="XP_011539978.1">
    <property type="nucleotide sequence ID" value="XM_011541676.2"/>
</dbReference>
<dbReference type="RefSeq" id="XP_016857079.1">
    <property type="nucleotide sequence ID" value="XM_017001590.2"/>
</dbReference>
<dbReference type="RefSeq" id="XP_054193286.1">
    <property type="nucleotide sequence ID" value="XM_054337311.1"/>
</dbReference>
<dbReference type="RefSeq" id="XP_054193287.1">
    <property type="nucleotide sequence ID" value="XM_054337312.1"/>
</dbReference>
<dbReference type="RefSeq" id="XP_054193288.1">
    <property type="nucleotide sequence ID" value="XM_054337313.1"/>
</dbReference>
<dbReference type="BioGRID" id="120404">
    <property type="interactions" value="112"/>
</dbReference>
<dbReference type="FunCoup" id="Q9NW97">
    <property type="interactions" value="22"/>
</dbReference>
<dbReference type="IntAct" id="Q9NW97">
    <property type="interactions" value="70"/>
</dbReference>
<dbReference type="MINT" id="Q9NW97"/>
<dbReference type="STRING" id="9606.ENSP00000365176"/>
<dbReference type="iPTMnet" id="Q9NW97"/>
<dbReference type="PhosphoSitePlus" id="Q9NW97"/>
<dbReference type="SwissPalm" id="Q9NW97"/>
<dbReference type="BioMuta" id="TMEM51"/>
<dbReference type="DMDM" id="68053240"/>
<dbReference type="jPOST" id="Q9NW97"/>
<dbReference type="MassIVE" id="Q9NW97"/>
<dbReference type="PaxDb" id="9606-ENSP00000394899"/>
<dbReference type="PeptideAtlas" id="Q9NW97"/>
<dbReference type="ProteomicsDB" id="82915"/>
<dbReference type="Antibodypedia" id="3057">
    <property type="antibodies" value="40 antibodies from 16 providers"/>
</dbReference>
<dbReference type="DNASU" id="55092"/>
<dbReference type="Ensembl" id="ENST00000376008.3">
    <property type="protein sequence ID" value="ENSP00000365176.1"/>
    <property type="gene ID" value="ENSG00000171729.14"/>
</dbReference>
<dbReference type="Ensembl" id="ENST00000376014.7">
    <property type="protein sequence ID" value="ENSP00000365182.3"/>
    <property type="gene ID" value="ENSG00000171729.14"/>
</dbReference>
<dbReference type="Ensembl" id="ENST00000400796.7">
    <property type="protein sequence ID" value="ENSP00000383600.2"/>
    <property type="gene ID" value="ENSG00000171729.14"/>
</dbReference>
<dbReference type="Ensembl" id="ENST00000428417.5">
    <property type="protein sequence ID" value="ENSP00000394899.1"/>
    <property type="gene ID" value="ENSG00000171729.14"/>
</dbReference>
<dbReference type="GeneID" id="55092"/>
<dbReference type="KEGG" id="hsa:55092"/>
<dbReference type="MANE-Select" id="ENST00000376008.3">
    <property type="protein sequence ID" value="ENSP00000365176.1"/>
    <property type="RefSeq nucleotide sequence ID" value="NM_001136218.2"/>
    <property type="RefSeq protein sequence ID" value="NP_001129690.1"/>
</dbReference>
<dbReference type="UCSC" id="uc001avw.5">
    <property type="organism name" value="human"/>
</dbReference>
<dbReference type="AGR" id="HGNC:25488"/>
<dbReference type="CTD" id="55092"/>
<dbReference type="DisGeNET" id="55092"/>
<dbReference type="GeneCards" id="TMEM51"/>
<dbReference type="HGNC" id="HGNC:25488">
    <property type="gene designation" value="TMEM51"/>
</dbReference>
<dbReference type="HPA" id="ENSG00000171729">
    <property type="expression patterns" value="Low tissue specificity"/>
</dbReference>
<dbReference type="neXtProt" id="NX_Q9NW97"/>
<dbReference type="OpenTargets" id="ENSG00000171729"/>
<dbReference type="PharmGKB" id="PA142670767"/>
<dbReference type="VEuPathDB" id="HostDB:ENSG00000171729"/>
<dbReference type="eggNOG" id="ENOG502QU2P">
    <property type="taxonomic scope" value="Eukaryota"/>
</dbReference>
<dbReference type="GeneTree" id="ENSGT00390000009278"/>
<dbReference type="HOGENOM" id="CLU_1115460_0_0_1"/>
<dbReference type="InParanoid" id="Q9NW97"/>
<dbReference type="OMA" id="EVMSTNY"/>
<dbReference type="OrthoDB" id="8946153at2759"/>
<dbReference type="PAN-GO" id="Q9NW97">
    <property type="GO annotations" value="0 GO annotations based on evolutionary models"/>
</dbReference>
<dbReference type="PhylomeDB" id="Q9NW97"/>
<dbReference type="TreeFam" id="TF332361"/>
<dbReference type="PathwayCommons" id="Q9NW97"/>
<dbReference type="SignaLink" id="Q9NW97"/>
<dbReference type="BioGRID-ORCS" id="55092">
    <property type="hits" value="10 hits in 1156 CRISPR screens"/>
</dbReference>
<dbReference type="ChiTaRS" id="TMEM51">
    <property type="organism name" value="human"/>
</dbReference>
<dbReference type="GeneWiki" id="TMEM51_(gene)"/>
<dbReference type="GenomeRNAi" id="55092"/>
<dbReference type="Pharos" id="Q9NW97">
    <property type="development level" value="Tdark"/>
</dbReference>
<dbReference type="PRO" id="PR:Q9NW97"/>
<dbReference type="Proteomes" id="UP000005640">
    <property type="component" value="Chromosome 1"/>
</dbReference>
<dbReference type="RNAct" id="Q9NW97">
    <property type="molecule type" value="protein"/>
</dbReference>
<dbReference type="Bgee" id="ENSG00000171729">
    <property type="expression patterns" value="Expressed in body of pancreas and 133 other cell types or tissues"/>
</dbReference>
<dbReference type="ExpressionAtlas" id="Q9NW97">
    <property type="expression patterns" value="baseline and differential"/>
</dbReference>
<dbReference type="GO" id="GO:0016020">
    <property type="term" value="C:membrane"/>
    <property type="evidence" value="ECO:0007669"/>
    <property type="project" value="UniProtKB-SubCell"/>
</dbReference>
<dbReference type="InterPro" id="IPR029265">
    <property type="entry name" value="TMEM51"/>
</dbReference>
<dbReference type="PANTHER" id="PTHR16015">
    <property type="entry name" value="TRANSMEMBRANE PROTEIN 51"/>
    <property type="match status" value="1"/>
</dbReference>
<dbReference type="PANTHER" id="PTHR16015:SF0">
    <property type="entry name" value="TRANSMEMBRANE PROTEIN 51"/>
    <property type="match status" value="1"/>
</dbReference>
<dbReference type="Pfam" id="PF15345">
    <property type="entry name" value="TMEM51"/>
    <property type="match status" value="1"/>
</dbReference>
<protein>
    <recommendedName>
        <fullName>Transmembrane protein 51</fullName>
    </recommendedName>
</protein>
<feature type="chain" id="PRO_0000072577" description="Transmembrane protein 51">
    <location>
        <begin position="1"/>
        <end position="253"/>
    </location>
</feature>
<feature type="transmembrane region" description="Helical" evidence="1">
    <location>
        <begin position="17"/>
        <end position="37"/>
    </location>
</feature>
<feature type="transmembrane region" description="Helical" evidence="1">
    <location>
        <begin position="65"/>
        <end position="85"/>
    </location>
</feature>
<feature type="region of interest" description="Disordered" evidence="2">
    <location>
        <begin position="93"/>
        <end position="133"/>
    </location>
</feature>
<feature type="region of interest" description="Disordered" evidence="2">
    <location>
        <begin position="164"/>
        <end position="253"/>
    </location>
</feature>
<feature type="compositionally biased region" description="Acidic residues" evidence="2">
    <location>
        <begin position="113"/>
        <end position="124"/>
    </location>
</feature>
<feature type="compositionally biased region" description="Polar residues" evidence="2">
    <location>
        <begin position="164"/>
        <end position="176"/>
    </location>
</feature>
<feature type="compositionally biased region" description="Basic residues" evidence="2">
    <location>
        <begin position="194"/>
        <end position="205"/>
    </location>
</feature>
<feature type="compositionally biased region" description="Basic and acidic residues" evidence="2">
    <location>
        <begin position="206"/>
        <end position="217"/>
    </location>
</feature>
<feature type="compositionally biased region" description="Pro residues" evidence="2">
    <location>
        <begin position="224"/>
        <end position="238"/>
    </location>
</feature>
<feature type="compositionally biased region" description="Basic and acidic residues" evidence="2">
    <location>
        <begin position="242"/>
        <end position="253"/>
    </location>
</feature>
<feature type="modified residue" description="Phosphoserine" evidence="4 5">
    <location>
        <position position="115"/>
    </location>
</feature>
<feature type="modified residue" description="Phosphoserine" evidence="5">
    <location>
        <position position="182"/>
    </location>
</feature>
<feature type="modified residue" description="Phosphoserine" evidence="5">
    <location>
        <position position="192"/>
    </location>
</feature>
<feature type="sequence variant" id="VAR_051446" description="In dbSNP:rs17405421.">
    <original>V</original>
    <variation>A</variation>
    <location>
        <position position="34"/>
    </location>
</feature>
<feature type="sequence variant" id="VAR_051447" description="In dbSNP:rs3766158.">
    <original>R</original>
    <variation>Q</variation>
    <location>
        <position position="92"/>
    </location>
</feature>
<evidence type="ECO:0000255" key="1"/>
<evidence type="ECO:0000256" key="2">
    <source>
        <dbReference type="SAM" id="MobiDB-lite"/>
    </source>
</evidence>
<evidence type="ECO:0000305" key="3"/>
<evidence type="ECO:0007744" key="4">
    <source>
    </source>
</evidence>
<evidence type="ECO:0007744" key="5">
    <source>
    </source>
</evidence>
<name>TMM51_HUMAN</name>
<organism>
    <name type="scientific">Homo sapiens</name>
    <name type="common">Human</name>
    <dbReference type="NCBI Taxonomy" id="9606"/>
    <lineage>
        <taxon>Eukaryota</taxon>
        <taxon>Metazoa</taxon>
        <taxon>Chordata</taxon>
        <taxon>Craniata</taxon>
        <taxon>Vertebrata</taxon>
        <taxon>Euteleostomi</taxon>
        <taxon>Mammalia</taxon>
        <taxon>Eutheria</taxon>
        <taxon>Euarchontoglires</taxon>
        <taxon>Primates</taxon>
        <taxon>Haplorrhini</taxon>
        <taxon>Catarrhini</taxon>
        <taxon>Hominidae</taxon>
        <taxon>Homo</taxon>
    </lineage>
</organism>
<proteinExistence type="evidence at protein level"/>
<accession>Q9NW97</accession>
<accession>A8K819</accession>
<reference key="1">
    <citation type="journal article" date="2004" name="Nat. Genet.">
        <title>Complete sequencing and characterization of 21,243 full-length human cDNAs.</title>
        <authorList>
            <person name="Ota T."/>
            <person name="Suzuki Y."/>
            <person name="Nishikawa T."/>
            <person name="Otsuki T."/>
            <person name="Sugiyama T."/>
            <person name="Irie R."/>
            <person name="Wakamatsu A."/>
            <person name="Hayashi K."/>
            <person name="Sato H."/>
            <person name="Nagai K."/>
            <person name="Kimura K."/>
            <person name="Makita H."/>
            <person name="Sekine M."/>
            <person name="Obayashi M."/>
            <person name="Nishi T."/>
            <person name="Shibahara T."/>
            <person name="Tanaka T."/>
            <person name="Ishii S."/>
            <person name="Yamamoto J."/>
            <person name="Saito K."/>
            <person name="Kawai Y."/>
            <person name="Isono Y."/>
            <person name="Nakamura Y."/>
            <person name="Nagahari K."/>
            <person name="Murakami K."/>
            <person name="Yasuda T."/>
            <person name="Iwayanagi T."/>
            <person name="Wagatsuma M."/>
            <person name="Shiratori A."/>
            <person name="Sudo H."/>
            <person name="Hosoiri T."/>
            <person name="Kaku Y."/>
            <person name="Kodaira H."/>
            <person name="Kondo H."/>
            <person name="Sugawara M."/>
            <person name="Takahashi M."/>
            <person name="Kanda K."/>
            <person name="Yokoi T."/>
            <person name="Furuya T."/>
            <person name="Kikkawa E."/>
            <person name="Omura Y."/>
            <person name="Abe K."/>
            <person name="Kamihara K."/>
            <person name="Katsuta N."/>
            <person name="Sato K."/>
            <person name="Tanikawa M."/>
            <person name="Yamazaki M."/>
            <person name="Ninomiya K."/>
            <person name="Ishibashi T."/>
            <person name="Yamashita H."/>
            <person name="Murakawa K."/>
            <person name="Fujimori K."/>
            <person name="Tanai H."/>
            <person name="Kimata M."/>
            <person name="Watanabe M."/>
            <person name="Hiraoka S."/>
            <person name="Chiba Y."/>
            <person name="Ishida S."/>
            <person name="Ono Y."/>
            <person name="Takiguchi S."/>
            <person name="Watanabe S."/>
            <person name="Yosida M."/>
            <person name="Hotuta T."/>
            <person name="Kusano J."/>
            <person name="Kanehori K."/>
            <person name="Takahashi-Fujii A."/>
            <person name="Hara H."/>
            <person name="Tanase T.-O."/>
            <person name="Nomura Y."/>
            <person name="Togiya S."/>
            <person name="Komai F."/>
            <person name="Hara R."/>
            <person name="Takeuchi K."/>
            <person name="Arita M."/>
            <person name="Imose N."/>
            <person name="Musashino K."/>
            <person name="Yuuki H."/>
            <person name="Oshima A."/>
            <person name="Sasaki N."/>
            <person name="Aotsuka S."/>
            <person name="Yoshikawa Y."/>
            <person name="Matsunawa H."/>
            <person name="Ichihara T."/>
            <person name="Shiohata N."/>
            <person name="Sano S."/>
            <person name="Moriya S."/>
            <person name="Momiyama H."/>
            <person name="Satoh N."/>
            <person name="Takami S."/>
            <person name="Terashima Y."/>
            <person name="Suzuki O."/>
            <person name="Nakagawa S."/>
            <person name="Senoh A."/>
            <person name="Mizoguchi H."/>
            <person name="Goto Y."/>
            <person name="Shimizu F."/>
            <person name="Wakebe H."/>
            <person name="Hishigaki H."/>
            <person name="Watanabe T."/>
            <person name="Sugiyama A."/>
            <person name="Takemoto M."/>
            <person name="Kawakami B."/>
            <person name="Yamazaki M."/>
            <person name="Watanabe K."/>
            <person name="Kumagai A."/>
            <person name="Itakura S."/>
            <person name="Fukuzumi Y."/>
            <person name="Fujimori Y."/>
            <person name="Komiyama M."/>
            <person name="Tashiro H."/>
            <person name="Tanigami A."/>
            <person name="Fujiwara T."/>
            <person name="Ono T."/>
            <person name="Yamada K."/>
            <person name="Fujii Y."/>
            <person name="Ozaki K."/>
            <person name="Hirao M."/>
            <person name="Ohmori Y."/>
            <person name="Kawabata A."/>
            <person name="Hikiji T."/>
            <person name="Kobatake N."/>
            <person name="Inagaki H."/>
            <person name="Ikema Y."/>
            <person name="Okamoto S."/>
            <person name="Okitani R."/>
            <person name="Kawakami T."/>
            <person name="Noguchi S."/>
            <person name="Itoh T."/>
            <person name="Shigeta K."/>
            <person name="Senba T."/>
            <person name="Matsumura K."/>
            <person name="Nakajima Y."/>
            <person name="Mizuno T."/>
            <person name="Morinaga M."/>
            <person name="Sasaki M."/>
            <person name="Togashi T."/>
            <person name="Oyama M."/>
            <person name="Hata H."/>
            <person name="Watanabe M."/>
            <person name="Komatsu T."/>
            <person name="Mizushima-Sugano J."/>
            <person name="Satoh T."/>
            <person name="Shirai Y."/>
            <person name="Takahashi Y."/>
            <person name="Nakagawa K."/>
            <person name="Okumura K."/>
            <person name="Nagase T."/>
            <person name="Nomura N."/>
            <person name="Kikuchi H."/>
            <person name="Masuho Y."/>
            <person name="Yamashita R."/>
            <person name="Nakai K."/>
            <person name="Yada T."/>
            <person name="Nakamura Y."/>
            <person name="Ohara O."/>
            <person name="Isogai T."/>
            <person name="Sugano S."/>
        </authorList>
    </citation>
    <scope>NUCLEOTIDE SEQUENCE [LARGE SCALE MRNA]</scope>
    <source>
        <tissue>Mammary gland</tissue>
    </source>
</reference>
<reference key="2">
    <citation type="submission" date="2004-06" db="EMBL/GenBank/DDBJ databases">
        <title>Cloning of human full open reading frames in Gateway(TM) system entry vector (pDONR201).</title>
        <authorList>
            <person name="Ebert L."/>
            <person name="Schick M."/>
            <person name="Neubert P."/>
            <person name="Schatten R."/>
            <person name="Henze S."/>
            <person name="Korn B."/>
        </authorList>
    </citation>
    <scope>NUCLEOTIDE SEQUENCE [LARGE SCALE MRNA]</scope>
</reference>
<reference key="3">
    <citation type="journal article" date="2006" name="Nature">
        <title>The DNA sequence and biological annotation of human chromosome 1.</title>
        <authorList>
            <person name="Gregory S.G."/>
            <person name="Barlow K.F."/>
            <person name="McLay K.E."/>
            <person name="Kaul R."/>
            <person name="Swarbreck D."/>
            <person name="Dunham A."/>
            <person name="Scott C.E."/>
            <person name="Howe K.L."/>
            <person name="Woodfine K."/>
            <person name="Spencer C.C.A."/>
            <person name="Jones M.C."/>
            <person name="Gillson C."/>
            <person name="Searle S."/>
            <person name="Zhou Y."/>
            <person name="Kokocinski F."/>
            <person name="McDonald L."/>
            <person name="Evans R."/>
            <person name="Phillips K."/>
            <person name="Atkinson A."/>
            <person name="Cooper R."/>
            <person name="Jones C."/>
            <person name="Hall R.E."/>
            <person name="Andrews T.D."/>
            <person name="Lloyd C."/>
            <person name="Ainscough R."/>
            <person name="Almeida J.P."/>
            <person name="Ambrose K.D."/>
            <person name="Anderson F."/>
            <person name="Andrew R.W."/>
            <person name="Ashwell R.I.S."/>
            <person name="Aubin K."/>
            <person name="Babbage A.K."/>
            <person name="Bagguley C.L."/>
            <person name="Bailey J."/>
            <person name="Beasley H."/>
            <person name="Bethel G."/>
            <person name="Bird C.P."/>
            <person name="Bray-Allen S."/>
            <person name="Brown J.Y."/>
            <person name="Brown A.J."/>
            <person name="Buckley D."/>
            <person name="Burton J."/>
            <person name="Bye J."/>
            <person name="Carder C."/>
            <person name="Chapman J.C."/>
            <person name="Clark S.Y."/>
            <person name="Clarke G."/>
            <person name="Clee C."/>
            <person name="Cobley V."/>
            <person name="Collier R.E."/>
            <person name="Corby N."/>
            <person name="Coville G.J."/>
            <person name="Davies J."/>
            <person name="Deadman R."/>
            <person name="Dunn M."/>
            <person name="Earthrowl M."/>
            <person name="Ellington A.G."/>
            <person name="Errington H."/>
            <person name="Frankish A."/>
            <person name="Frankland J."/>
            <person name="French L."/>
            <person name="Garner P."/>
            <person name="Garnett J."/>
            <person name="Gay L."/>
            <person name="Ghori M.R.J."/>
            <person name="Gibson R."/>
            <person name="Gilby L.M."/>
            <person name="Gillett W."/>
            <person name="Glithero R.J."/>
            <person name="Grafham D.V."/>
            <person name="Griffiths C."/>
            <person name="Griffiths-Jones S."/>
            <person name="Grocock R."/>
            <person name="Hammond S."/>
            <person name="Harrison E.S.I."/>
            <person name="Hart E."/>
            <person name="Haugen E."/>
            <person name="Heath P.D."/>
            <person name="Holmes S."/>
            <person name="Holt K."/>
            <person name="Howden P.J."/>
            <person name="Hunt A.R."/>
            <person name="Hunt S.E."/>
            <person name="Hunter G."/>
            <person name="Isherwood J."/>
            <person name="James R."/>
            <person name="Johnson C."/>
            <person name="Johnson D."/>
            <person name="Joy A."/>
            <person name="Kay M."/>
            <person name="Kershaw J.K."/>
            <person name="Kibukawa M."/>
            <person name="Kimberley A.M."/>
            <person name="King A."/>
            <person name="Knights A.J."/>
            <person name="Lad H."/>
            <person name="Laird G."/>
            <person name="Lawlor S."/>
            <person name="Leongamornlert D.A."/>
            <person name="Lloyd D.M."/>
            <person name="Loveland J."/>
            <person name="Lovell J."/>
            <person name="Lush M.J."/>
            <person name="Lyne R."/>
            <person name="Martin S."/>
            <person name="Mashreghi-Mohammadi M."/>
            <person name="Matthews L."/>
            <person name="Matthews N.S.W."/>
            <person name="McLaren S."/>
            <person name="Milne S."/>
            <person name="Mistry S."/>
            <person name="Moore M.J.F."/>
            <person name="Nickerson T."/>
            <person name="O'Dell C.N."/>
            <person name="Oliver K."/>
            <person name="Palmeiri A."/>
            <person name="Palmer S.A."/>
            <person name="Parker A."/>
            <person name="Patel D."/>
            <person name="Pearce A.V."/>
            <person name="Peck A.I."/>
            <person name="Pelan S."/>
            <person name="Phelps K."/>
            <person name="Phillimore B.J."/>
            <person name="Plumb R."/>
            <person name="Rajan J."/>
            <person name="Raymond C."/>
            <person name="Rouse G."/>
            <person name="Saenphimmachak C."/>
            <person name="Sehra H.K."/>
            <person name="Sheridan E."/>
            <person name="Shownkeen R."/>
            <person name="Sims S."/>
            <person name="Skuce C.D."/>
            <person name="Smith M."/>
            <person name="Steward C."/>
            <person name="Subramanian S."/>
            <person name="Sycamore N."/>
            <person name="Tracey A."/>
            <person name="Tromans A."/>
            <person name="Van Helmond Z."/>
            <person name="Wall M."/>
            <person name="Wallis J.M."/>
            <person name="White S."/>
            <person name="Whitehead S.L."/>
            <person name="Wilkinson J.E."/>
            <person name="Willey D.L."/>
            <person name="Williams H."/>
            <person name="Wilming L."/>
            <person name="Wray P.W."/>
            <person name="Wu Z."/>
            <person name="Coulson A."/>
            <person name="Vaudin M."/>
            <person name="Sulston J.E."/>
            <person name="Durbin R.M."/>
            <person name="Hubbard T."/>
            <person name="Wooster R."/>
            <person name="Dunham I."/>
            <person name="Carter N.P."/>
            <person name="McVean G."/>
            <person name="Ross M.T."/>
            <person name="Harrow J."/>
            <person name="Olson M.V."/>
            <person name="Beck S."/>
            <person name="Rogers J."/>
            <person name="Bentley D.R."/>
        </authorList>
    </citation>
    <scope>NUCLEOTIDE SEQUENCE [LARGE SCALE GENOMIC DNA]</scope>
</reference>
<reference key="4">
    <citation type="submission" date="2005-07" db="EMBL/GenBank/DDBJ databases">
        <authorList>
            <person name="Mural R.J."/>
            <person name="Istrail S."/>
            <person name="Sutton G.G."/>
            <person name="Florea L."/>
            <person name="Halpern A.L."/>
            <person name="Mobarry C.M."/>
            <person name="Lippert R."/>
            <person name="Walenz B."/>
            <person name="Shatkay H."/>
            <person name="Dew I."/>
            <person name="Miller J.R."/>
            <person name="Flanigan M.J."/>
            <person name="Edwards N.J."/>
            <person name="Bolanos R."/>
            <person name="Fasulo D."/>
            <person name="Halldorsson B.V."/>
            <person name="Hannenhalli S."/>
            <person name="Turner R."/>
            <person name="Yooseph S."/>
            <person name="Lu F."/>
            <person name="Nusskern D.R."/>
            <person name="Shue B.C."/>
            <person name="Zheng X.H."/>
            <person name="Zhong F."/>
            <person name="Delcher A.L."/>
            <person name="Huson D.H."/>
            <person name="Kravitz S.A."/>
            <person name="Mouchard L."/>
            <person name="Reinert K."/>
            <person name="Remington K.A."/>
            <person name="Clark A.G."/>
            <person name="Waterman M.S."/>
            <person name="Eichler E.E."/>
            <person name="Adams M.D."/>
            <person name="Hunkapiller M.W."/>
            <person name="Myers E.W."/>
            <person name="Venter J.C."/>
        </authorList>
    </citation>
    <scope>NUCLEOTIDE SEQUENCE [LARGE SCALE GENOMIC DNA]</scope>
</reference>
<reference key="5">
    <citation type="journal article" date="2004" name="Genome Res.">
        <title>The status, quality, and expansion of the NIH full-length cDNA project: the Mammalian Gene Collection (MGC).</title>
        <authorList>
            <consortium name="The MGC Project Team"/>
        </authorList>
    </citation>
    <scope>NUCLEOTIDE SEQUENCE [LARGE SCALE MRNA]</scope>
    <source>
        <tissue>Eye</tissue>
        <tissue>Kidney</tissue>
    </source>
</reference>
<reference key="6">
    <citation type="journal article" date="2009" name="Anal. Chem.">
        <title>Lys-N and trypsin cover complementary parts of the phosphoproteome in a refined SCX-based approach.</title>
        <authorList>
            <person name="Gauci S."/>
            <person name="Helbig A.O."/>
            <person name="Slijper M."/>
            <person name="Krijgsveld J."/>
            <person name="Heck A.J."/>
            <person name="Mohammed S."/>
        </authorList>
    </citation>
    <scope>IDENTIFICATION BY MASS SPECTROMETRY [LARGE SCALE ANALYSIS]</scope>
</reference>
<reference key="7">
    <citation type="journal article" date="2011" name="Sci. Signal.">
        <title>System-wide temporal characterization of the proteome and phosphoproteome of human embryonic stem cell differentiation.</title>
        <authorList>
            <person name="Rigbolt K.T."/>
            <person name="Prokhorova T.A."/>
            <person name="Akimov V."/>
            <person name="Henningsen J."/>
            <person name="Johansen P.T."/>
            <person name="Kratchmarova I."/>
            <person name="Kassem M."/>
            <person name="Mann M."/>
            <person name="Olsen J.V."/>
            <person name="Blagoev B."/>
        </authorList>
    </citation>
    <scope>PHOSPHORYLATION [LARGE SCALE ANALYSIS] AT SER-115</scope>
    <scope>IDENTIFICATION BY MASS SPECTROMETRY [LARGE SCALE ANALYSIS]</scope>
</reference>
<reference key="8">
    <citation type="journal article" date="2013" name="J. Proteome Res.">
        <title>Toward a comprehensive characterization of a human cancer cell phosphoproteome.</title>
        <authorList>
            <person name="Zhou H."/>
            <person name="Di Palma S."/>
            <person name="Preisinger C."/>
            <person name="Peng M."/>
            <person name="Polat A.N."/>
            <person name="Heck A.J."/>
            <person name="Mohammed S."/>
        </authorList>
    </citation>
    <scope>PHOSPHORYLATION [LARGE SCALE ANALYSIS] AT SER-115; SER-182 AND SER-192</scope>
    <scope>IDENTIFICATION BY MASS SPECTROMETRY [LARGE SCALE ANALYSIS]</scope>
    <source>
        <tissue>Cervix carcinoma</tissue>
        <tissue>Erythroleukemia</tissue>
    </source>
</reference>
<keyword id="KW-0472">Membrane</keyword>
<keyword id="KW-0597">Phosphoprotein</keyword>
<keyword id="KW-1267">Proteomics identification</keyword>
<keyword id="KW-1185">Reference proteome</keyword>
<keyword id="KW-0812">Transmembrane</keyword>
<keyword id="KW-1133">Transmembrane helix</keyword>